<feature type="chain" id="PRO_1000016408" description="Histidine--tRNA ligase">
    <location>
        <begin position="1"/>
        <end position="424"/>
    </location>
</feature>
<organism>
    <name type="scientific">Pediococcus pentosaceus (strain ATCC 25745 / CCUG 21536 / LMG 10740 / 183-1w)</name>
    <dbReference type="NCBI Taxonomy" id="278197"/>
    <lineage>
        <taxon>Bacteria</taxon>
        <taxon>Bacillati</taxon>
        <taxon>Bacillota</taxon>
        <taxon>Bacilli</taxon>
        <taxon>Lactobacillales</taxon>
        <taxon>Lactobacillaceae</taxon>
        <taxon>Pediococcus</taxon>
    </lineage>
</organism>
<evidence type="ECO:0000255" key="1">
    <source>
        <dbReference type="HAMAP-Rule" id="MF_00127"/>
    </source>
</evidence>
<keyword id="KW-0030">Aminoacyl-tRNA synthetase</keyword>
<keyword id="KW-0067">ATP-binding</keyword>
<keyword id="KW-0963">Cytoplasm</keyword>
<keyword id="KW-0436">Ligase</keyword>
<keyword id="KW-0547">Nucleotide-binding</keyword>
<keyword id="KW-0648">Protein biosynthesis</keyword>
<comment type="catalytic activity">
    <reaction evidence="1">
        <text>tRNA(His) + L-histidine + ATP = L-histidyl-tRNA(His) + AMP + diphosphate + H(+)</text>
        <dbReference type="Rhea" id="RHEA:17313"/>
        <dbReference type="Rhea" id="RHEA-COMP:9665"/>
        <dbReference type="Rhea" id="RHEA-COMP:9689"/>
        <dbReference type="ChEBI" id="CHEBI:15378"/>
        <dbReference type="ChEBI" id="CHEBI:30616"/>
        <dbReference type="ChEBI" id="CHEBI:33019"/>
        <dbReference type="ChEBI" id="CHEBI:57595"/>
        <dbReference type="ChEBI" id="CHEBI:78442"/>
        <dbReference type="ChEBI" id="CHEBI:78527"/>
        <dbReference type="ChEBI" id="CHEBI:456215"/>
        <dbReference type="EC" id="6.1.1.21"/>
    </reaction>
</comment>
<comment type="subunit">
    <text evidence="1">Homodimer.</text>
</comment>
<comment type="subcellular location">
    <subcellularLocation>
        <location evidence="1">Cytoplasm</location>
    </subcellularLocation>
</comment>
<comment type="similarity">
    <text evidence="1">Belongs to the class-II aminoacyl-tRNA synthetase family.</text>
</comment>
<reference key="1">
    <citation type="journal article" date="2006" name="Proc. Natl. Acad. Sci. U.S.A.">
        <title>Comparative genomics of the lactic acid bacteria.</title>
        <authorList>
            <person name="Makarova K.S."/>
            <person name="Slesarev A."/>
            <person name="Wolf Y.I."/>
            <person name="Sorokin A."/>
            <person name="Mirkin B."/>
            <person name="Koonin E.V."/>
            <person name="Pavlov A."/>
            <person name="Pavlova N."/>
            <person name="Karamychev V."/>
            <person name="Polouchine N."/>
            <person name="Shakhova V."/>
            <person name="Grigoriev I."/>
            <person name="Lou Y."/>
            <person name="Rohksar D."/>
            <person name="Lucas S."/>
            <person name="Huang K."/>
            <person name="Goodstein D.M."/>
            <person name="Hawkins T."/>
            <person name="Plengvidhya V."/>
            <person name="Welker D."/>
            <person name="Hughes J."/>
            <person name="Goh Y."/>
            <person name="Benson A."/>
            <person name="Baldwin K."/>
            <person name="Lee J.-H."/>
            <person name="Diaz-Muniz I."/>
            <person name="Dosti B."/>
            <person name="Smeianov V."/>
            <person name="Wechter W."/>
            <person name="Barabote R."/>
            <person name="Lorca G."/>
            <person name="Altermann E."/>
            <person name="Barrangou R."/>
            <person name="Ganesan B."/>
            <person name="Xie Y."/>
            <person name="Rawsthorne H."/>
            <person name="Tamir D."/>
            <person name="Parker C."/>
            <person name="Breidt F."/>
            <person name="Broadbent J.R."/>
            <person name="Hutkins R."/>
            <person name="O'Sullivan D."/>
            <person name="Steele J."/>
            <person name="Unlu G."/>
            <person name="Saier M.H. Jr."/>
            <person name="Klaenhammer T."/>
            <person name="Richardson P."/>
            <person name="Kozyavkin S."/>
            <person name="Weimer B.C."/>
            <person name="Mills D.A."/>
        </authorList>
    </citation>
    <scope>NUCLEOTIDE SEQUENCE [LARGE SCALE GENOMIC DNA]</scope>
    <source>
        <strain>ATCC 25745 / CCUG 21536 / LMG 10740 / 183-1w</strain>
    </source>
</reference>
<accession>Q03F51</accession>
<protein>
    <recommendedName>
        <fullName evidence="1">Histidine--tRNA ligase</fullName>
        <ecNumber evidence="1">6.1.1.21</ecNumber>
    </recommendedName>
    <alternativeName>
        <fullName evidence="1">Histidyl-tRNA synthetase</fullName>
        <shortName evidence="1">HisRS</shortName>
    </alternativeName>
</protein>
<dbReference type="EC" id="6.1.1.21" evidence="1"/>
<dbReference type="EMBL" id="CP000422">
    <property type="protein sequence ID" value="ABJ68171.1"/>
    <property type="molecule type" value="Genomic_DNA"/>
</dbReference>
<dbReference type="RefSeq" id="WP_011673500.1">
    <property type="nucleotide sequence ID" value="NC_008525.1"/>
</dbReference>
<dbReference type="SMR" id="Q03F51"/>
<dbReference type="STRING" id="278197.PEPE_1116"/>
<dbReference type="GeneID" id="33062629"/>
<dbReference type="KEGG" id="ppe:PEPE_1116"/>
<dbReference type="eggNOG" id="COG0124">
    <property type="taxonomic scope" value="Bacteria"/>
</dbReference>
<dbReference type="HOGENOM" id="CLU_025113_1_1_9"/>
<dbReference type="OrthoDB" id="9800814at2"/>
<dbReference type="Proteomes" id="UP000000773">
    <property type="component" value="Chromosome"/>
</dbReference>
<dbReference type="GO" id="GO:0005737">
    <property type="term" value="C:cytoplasm"/>
    <property type="evidence" value="ECO:0007669"/>
    <property type="project" value="UniProtKB-SubCell"/>
</dbReference>
<dbReference type="GO" id="GO:0005524">
    <property type="term" value="F:ATP binding"/>
    <property type="evidence" value="ECO:0007669"/>
    <property type="project" value="UniProtKB-UniRule"/>
</dbReference>
<dbReference type="GO" id="GO:0140096">
    <property type="term" value="F:catalytic activity, acting on a protein"/>
    <property type="evidence" value="ECO:0007669"/>
    <property type="project" value="UniProtKB-ARBA"/>
</dbReference>
<dbReference type="GO" id="GO:0004821">
    <property type="term" value="F:histidine-tRNA ligase activity"/>
    <property type="evidence" value="ECO:0007669"/>
    <property type="project" value="UniProtKB-UniRule"/>
</dbReference>
<dbReference type="GO" id="GO:0016740">
    <property type="term" value="F:transferase activity"/>
    <property type="evidence" value="ECO:0007669"/>
    <property type="project" value="UniProtKB-ARBA"/>
</dbReference>
<dbReference type="GO" id="GO:0006427">
    <property type="term" value="P:histidyl-tRNA aminoacylation"/>
    <property type="evidence" value="ECO:0007669"/>
    <property type="project" value="UniProtKB-UniRule"/>
</dbReference>
<dbReference type="CDD" id="cd00773">
    <property type="entry name" value="HisRS-like_core"/>
    <property type="match status" value="1"/>
</dbReference>
<dbReference type="CDD" id="cd00859">
    <property type="entry name" value="HisRS_anticodon"/>
    <property type="match status" value="1"/>
</dbReference>
<dbReference type="FunFam" id="3.30.930.10:FF:000005">
    <property type="entry name" value="Histidine--tRNA ligase"/>
    <property type="match status" value="1"/>
</dbReference>
<dbReference type="Gene3D" id="3.40.50.800">
    <property type="entry name" value="Anticodon-binding domain"/>
    <property type="match status" value="1"/>
</dbReference>
<dbReference type="Gene3D" id="3.30.930.10">
    <property type="entry name" value="Bira Bifunctional Protein, Domain 2"/>
    <property type="match status" value="1"/>
</dbReference>
<dbReference type="HAMAP" id="MF_00127">
    <property type="entry name" value="His_tRNA_synth"/>
    <property type="match status" value="1"/>
</dbReference>
<dbReference type="InterPro" id="IPR006195">
    <property type="entry name" value="aa-tRNA-synth_II"/>
</dbReference>
<dbReference type="InterPro" id="IPR045864">
    <property type="entry name" value="aa-tRNA-synth_II/BPL/LPL"/>
</dbReference>
<dbReference type="InterPro" id="IPR004154">
    <property type="entry name" value="Anticodon-bd"/>
</dbReference>
<dbReference type="InterPro" id="IPR036621">
    <property type="entry name" value="Anticodon-bd_dom_sf"/>
</dbReference>
<dbReference type="InterPro" id="IPR015807">
    <property type="entry name" value="His-tRNA-ligase"/>
</dbReference>
<dbReference type="InterPro" id="IPR041715">
    <property type="entry name" value="HisRS-like_core"/>
</dbReference>
<dbReference type="InterPro" id="IPR004516">
    <property type="entry name" value="HisRS/HisZ"/>
</dbReference>
<dbReference type="InterPro" id="IPR033656">
    <property type="entry name" value="HisRS_anticodon"/>
</dbReference>
<dbReference type="NCBIfam" id="TIGR00442">
    <property type="entry name" value="hisS"/>
    <property type="match status" value="1"/>
</dbReference>
<dbReference type="PANTHER" id="PTHR43707:SF1">
    <property type="entry name" value="HISTIDINE--TRNA LIGASE, MITOCHONDRIAL-RELATED"/>
    <property type="match status" value="1"/>
</dbReference>
<dbReference type="PANTHER" id="PTHR43707">
    <property type="entry name" value="HISTIDYL-TRNA SYNTHETASE"/>
    <property type="match status" value="1"/>
</dbReference>
<dbReference type="Pfam" id="PF03129">
    <property type="entry name" value="HGTP_anticodon"/>
    <property type="match status" value="1"/>
</dbReference>
<dbReference type="Pfam" id="PF13393">
    <property type="entry name" value="tRNA-synt_His"/>
    <property type="match status" value="1"/>
</dbReference>
<dbReference type="PIRSF" id="PIRSF001549">
    <property type="entry name" value="His-tRNA_synth"/>
    <property type="match status" value="1"/>
</dbReference>
<dbReference type="SUPFAM" id="SSF52954">
    <property type="entry name" value="Class II aaRS ABD-related"/>
    <property type="match status" value="1"/>
</dbReference>
<dbReference type="SUPFAM" id="SSF55681">
    <property type="entry name" value="Class II aaRS and biotin synthetases"/>
    <property type="match status" value="1"/>
</dbReference>
<dbReference type="PROSITE" id="PS50862">
    <property type="entry name" value="AA_TRNA_LIGASE_II"/>
    <property type="match status" value="1"/>
</dbReference>
<gene>
    <name evidence="1" type="primary">hisS</name>
    <name type="ordered locus">PEPE_1116</name>
</gene>
<name>SYH_PEDPA</name>
<proteinExistence type="inferred from homology"/>
<sequence length="424" mass="48352">MKYQKPKGTADILPPFSKEWQFVEQNARETFALYNYEEIRTPIFEKFEVFSRSAGDTSDIVTKEMYDFDDKGGRHIALRPEGTAGVVRAFVENKLYGPEHQKPVKVYYMGPMFRYERPQSGRLREFHQIGVEAFGSDSPKIDVETIMMGMDFLKKLKVSGLKLVINTLGDKESRDRYRQALIDYLEPHFEELSDDSKARLHKNPLRVLDSKDKNDQKIVENAPEILDFLTEDAQKHFTSVKEELDTLGVDYVVDSSMVRGLDYYNHTIFEIMIADSPLGKGDVTICAGGRYNGLVEELGGPEVSGVGFGLGVERLLLLLNAETQTTLQSKQLDFYVVGIGDLVQNDVLKVVHELRQMNFVTEQDYLDRKPKAQFKSADKLNAKYVVTIGESEMNDRIFKLKDMHSGEERTVALSEINTLKDLLK</sequence>